<reference key="1">
    <citation type="journal article" date="2001" name="Lancet">
        <title>Whole genome sequencing of meticillin-resistant Staphylococcus aureus.</title>
        <authorList>
            <person name="Kuroda M."/>
            <person name="Ohta T."/>
            <person name="Uchiyama I."/>
            <person name="Baba T."/>
            <person name="Yuzawa H."/>
            <person name="Kobayashi I."/>
            <person name="Cui L."/>
            <person name="Oguchi A."/>
            <person name="Aoki K."/>
            <person name="Nagai Y."/>
            <person name="Lian J.-Q."/>
            <person name="Ito T."/>
            <person name="Kanamori M."/>
            <person name="Matsumaru H."/>
            <person name="Maruyama A."/>
            <person name="Murakami H."/>
            <person name="Hosoyama A."/>
            <person name="Mizutani-Ui Y."/>
            <person name="Takahashi N.K."/>
            <person name="Sawano T."/>
            <person name="Inoue R."/>
            <person name="Kaito C."/>
            <person name="Sekimizu K."/>
            <person name="Hirakawa H."/>
            <person name="Kuhara S."/>
            <person name="Goto S."/>
            <person name="Yabuzaki J."/>
            <person name="Kanehisa M."/>
            <person name="Yamashita A."/>
            <person name="Oshima K."/>
            <person name="Furuya K."/>
            <person name="Yoshino C."/>
            <person name="Shiba T."/>
            <person name="Hattori M."/>
            <person name="Ogasawara N."/>
            <person name="Hayashi H."/>
            <person name="Hiramatsu K."/>
        </authorList>
    </citation>
    <scope>NUCLEOTIDE SEQUENCE [LARGE SCALE GENOMIC DNA]</scope>
    <source>
        <strain>Mu50 / ATCC 700699</strain>
    </source>
</reference>
<gene>
    <name type="primary">hrtA</name>
    <name type="ordered locus">SAV2359</name>
</gene>
<dbReference type="EC" id="7.6.2.-"/>
<dbReference type="EMBL" id="BA000017">
    <property type="protein sequence ID" value="BAB58521.1"/>
    <property type="molecule type" value="Genomic_DNA"/>
</dbReference>
<dbReference type="RefSeq" id="WP_001229920.1">
    <property type="nucleotide sequence ID" value="NC_002758.2"/>
</dbReference>
<dbReference type="SMR" id="Q99RR8"/>
<dbReference type="KEGG" id="sav:SAV2359"/>
<dbReference type="HOGENOM" id="CLU_000604_1_22_9"/>
<dbReference type="PhylomeDB" id="Q99RR8"/>
<dbReference type="Proteomes" id="UP000002481">
    <property type="component" value="Chromosome"/>
</dbReference>
<dbReference type="GO" id="GO:0005886">
    <property type="term" value="C:plasma membrane"/>
    <property type="evidence" value="ECO:0007669"/>
    <property type="project" value="UniProtKB-SubCell"/>
</dbReference>
<dbReference type="GO" id="GO:0005524">
    <property type="term" value="F:ATP binding"/>
    <property type="evidence" value="ECO:0007669"/>
    <property type="project" value="UniProtKB-KW"/>
</dbReference>
<dbReference type="GO" id="GO:0016887">
    <property type="term" value="F:ATP hydrolysis activity"/>
    <property type="evidence" value="ECO:0007669"/>
    <property type="project" value="InterPro"/>
</dbReference>
<dbReference type="GO" id="GO:0022857">
    <property type="term" value="F:transmembrane transporter activity"/>
    <property type="evidence" value="ECO:0007669"/>
    <property type="project" value="TreeGrafter"/>
</dbReference>
<dbReference type="CDD" id="cd03255">
    <property type="entry name" value="ABC_MJ0796_LolCDE_FtsE"/>
    <property type="match status" value="1"/>
</dbReference>
<dbReference type="FunFam" id="3.40.50.300:FF:000032">
    <property type="entry name" value="Export ABC transporter ATP-binding protein"/>
    <property type="match status" value="1"/>
</dbReference>
<dbReference type="Gene3D" id="3.40.50.300">
    <property type="entry name" value="P-loop containing nucleotide triphosphate hydrolases"/>
    <property type="match status" value="1"/>
</dbReference>
<dbReference type="InterPro" id="IPR003593">
    <property type="entry name" value="AAA+_ATPase"/>
</dbReference>
<dbReference type="InterPro" id="IPR003439">
    <property type="entry name" value="ABC_transporter-like_ATP-bd"/>
</dbReference>
<dbReference type="InterPro" id="IPR015854">
    <property type="entry name" value="ABC_transpr_LolD-like"/>
</dbReference>
<dbReference type="InterPro" id="IPR017911">
    <property type="entry name" value="MacB-like_ATP-bd"/>
</dbReference>
<dbReference type="InterPro" id="IPR027417">
    <property type="entry name" value="P-loop_NTPase"/>
</dbReference>
<dbReference type="PANTHER" id="PTHR24220:SF666">
    <property type="entry name" value="HEMIN IMPORT ATP-BINDING PROTEIN HRTA-RELATED"/>
    <property type="match status" value="1"/>
</dbReference>
<dbReference type="PANTHER" id="PTHR24220">
    <property type="entry name" value="IMPORT ATP-BINDING PROTEIN"/>
    <property type="match status" value="1"/>
</dbReference>
<dbReference type="Pfam" id="PF00005">
    <property type="entry name" value="ABC_tran"/>
    <property type="match status" value="1"/>
</dbReference>
<dbReference type="SMART" id="SM00382">
    <property type="entry name" value="AAA"/>
    <property type="match status" value="1"/>
</dbReference>
<dbReference type="SUPFAM" id="SSF52540">
    <property type="entry name" value="P-loop containing nucleoside triphosphate hydrolases"/>
    <property type="match status" value="1"/>
</dbReference>
<dbReference type="PROSITE" id="PS50893">
    <property type="entry name" value="ABC_TRANSPORTER_2"/>
    <property type="match status" value="1"/>
</dbReference>
<keyword id="KW-0067">ATP-binding</keyword>
<keyword id="KW-1003">Cell membrane</keyword>
<keyword id="KW-0472">Membrane</keyword>
<keyword id="KW-0547">Nucleotide-binding</keyword>
<keyword id="KW-1278">Translocase</keyword>
<keyword id="KW-0813">Transport</keyword>
<organism>
    <name type="scientific">Staphylococcus aureus (strain Mu50 / ATCC 700699)</name>
    <dbReference type="NCBI Taxonomy" id="158878"/>
    <lineage>
        <taxon>Bacteria</taxon>
        <taxon>Bacillati</taxon>
        <taxon>Bacillota</taxon>
        <taxon>Bacilli</taxon>
        <taxon>Bacillales</taxon>
        <taxon>Staphylococcaceae</taxon>
        <taxon>Staphylococcus</taxon>
    </lineage>
</organism>
<comment type="function">
    <text evidence="1">Part of the ABC transporter complex hrt involved in hemin import. Responsible for energy coupling to the transport system (By similarity).</text>
</comment>
<comment type="subunit">
    <text evidence="1">The complex is composed of two ATP-binding proteins (HrtA), two transmembrane proteins (HrtB) and a solute-binding protein.</text>
</comment>
<comment type="subcellular location">
    <subcellularLocation>
        <location evidence="3">Cell membrane</location>
        <topology evidence="3">Peripheral membrane protein</topology>
    </subcellularLocation>
</comment>
<comment type="induction">
    <text>Highly induced by hemin.</text>
</comment>
<comment type="similarity">
    <text evidence="3">Belongs to the ABC transporter superfamily. HrtA family.</text>
</comment>
<protein>
    <recommendedName>
        <fullName>Putative hemin import ATP-binding protein HrtA</fullName>
        <ecNumber>7.6.2.-</ecNumber>
    </recommendedName>
</protein>
<evidence type="ECO:0000250" key="1"/>
<evidence type="ECO:0000255" key="2">
    <source>
        <dbReference type="PROSITE-ProRule" id="PRU00434"/>
    </source>
</evidence>
<evidence type="ECO:0000305" key="3"/>
<proteinExistence type="evidence at transcript level"/>
<sequence length="221" mass="24625">MALVVKDIVKNFGEGLSETKVLKGINFEVEQGEFVILNGASGSGKTTLLTILGGLLSQTSGTVLYNDAPLFDKQHRPSDLRLEDIGFIFQSSHLVPYLKVIEQLTLVGQEAGMTKQQSSTRAIQLLKNIGLEDRLNVYPHQLSGGEKQRVAIMRAFMNNPKIILADEPTASLDADRATKVVEMIRQQIKEQQMIGIMITHDRRLFEYADRVIELEDGKITD</sequence>
<accession>Q99RR8</accession>
<name>HRTA_STAAM</name>
<feature type="chain" id="PRO_0000270132" description="Putative hemin import ATP-binding protein HrtA">
    <location>
        <begin position="1"/>
        <end position="221"/>
    </location>
</feature>
<feature type="domain" description="ABC transporter" evidence="2">
    <location>
        <begin position="3"/>
        <end position="221"/>
    </location>
</feature>
<feature type="binding site" evidence="2">
    <location>
        <begin position="39"/>
        <end position="46"/>
    </location>
    <ligand>
        <name>ATP</name>
        <dbReference type="ChEBI" id="CHEBI:30616"/>
    </ligand>
</feature>